<evidence type="ECO:0000250" key="1"/>
<evidence type="ECO:0000255" key="2">
    <source>
        <dbReference type="PROSITE-ProRule" id="PRU00085"/>
    </source>
</evidence>
<evidence type="ECO:0000269" key="3">
    <source>
    </source>
</evidence>
<evidence type="ECO:0000305" key="4"/>
<gene>
    <name type="primary">bfrB</name>
    <name type="synonym">ftn</name>
    <name type="ordered locus">MSMEG_6422</name>
    <name type="ordered locus">MSMEI_6254</name>
</gene>
<comment type="function">
    <text evidence="1">Iron-storage protein that displays ferroxidase activity, catalyzing the oxidation of Fe(2+) ions into Fe(3+) ions, that can then be deposited as a ferric-oxide mineral core within the central cavity of the protein complex.</text>
</comment>
<comment type="catalytic activity">
    <reaction>
        <text>4 Fe(2+) + O2 + 4 H(+) = 4 Fe(3+) + 2 H2O</text>
        <dbReference type="Rhea" id="RHEA:11148"/>
        <dbReference type="ChEBI" id="CHEBI:15377"/>
        <dbReference type="ChEBI" id="CHEBI:15378"/>
        <dbReference type="ChEBI" id="CHEBI:15379"/>
        <dbReference type="ChEBI" id="CHEBI:29033"/>
        <dbReference type="ChEBI" id="CHEBI:29034"/>
        <dbReference type="EC" id="1.16.3.1"/>
    </reaction>
</comment>
<comment type="subunit">
    <text evidence="1">Homooligomer of 24 subunits that are packed together to form an approximately spherical molecule with a central cavity, in which large amounts of iron can be stored.</text>
</comment>
<comment type="similarity">
    <text evidence="4">Belongs to the ferritin family. Prokaryotic subfamily.</text>
</comment>
<keyword id="KW-0408">Iron</keyword>
<keyword id="KW-0409">Iron storage</keyword>
<keyword id="KW-1017">Isopeptide bond</keyword>
<keyword id="KW-0479">Metal-binding</keyword>
<keyword id="KW-0560">Oxidoreductase</keyword>
<keyword id="KW-1185">Reference proteome</keyword>
<keyword id="KW-0832">Ubl conjugation</keyword>
<accession>A0R647</accession>
<accession>I7FMX7</accession>
<reference key="1">
    <citation type="submission" date="2006-10" db="EMBL/GenBank/DDBJ databases">
        <authorList>
            <person name="Fleischmann R.D."/>
            <person name="Dodson R.J."/>
            <person name="Haft D.H."/>
            <person name="Merkel J.S."/>
            <person name="Nelson W.C."/>
            <person name="Fraser C.M."/>
        </authorList>
    </citation>
    <scope>NUCLEOTIDE SEQUENCE [LARGE SCALE GENOMIC DNA]</scope>
    <source>
        <strain>ATCC 700084 / mc(2)155</strain>
    </source>
</reference>
<reference key="2">
    <citation type="journal article" date="2007" name="Genome Biol.">
        <title>Interrupted coding sequences in Mycobacterium smegmatis: authentic mutations or sequencing errors?</title>
        <authorList>
            <person name="Deshayes C."/>
            <person name="Perrodou E."/>
            <person name="Gallien S."/>
            <person name="Euphrasie D."/>
            <person name="Schaeffer C."/>
            <person name="Van-Dorsselaer A."/>
            <person name="Poch O."/>
            <person name="Lecompte O."/>
            <person name="Reyrat J.-M."/>
        </authorList>
    </citation>
    <scope>NUCLEOTIDE SEQUENCE [LARGE SCALE GENOMIC DNA]</scope>
    <source>
        <strain>ATCC 700084 / mc(2)155</strain>
    </source>
</reference>
<reference key="3">
    <citation type="journal article" date="2009" name="Genome Res.">
        <title>Ortho-proteogenomics: multiple proteomes investigation through orthology and a new MS-based protocol.</title>
        <authorList>
            <person name="Gallien S."/>
            <person name="Perrodou E."/>
            <person name="Carapito C."/>
            <person name="Deshayes C."/>
            <person name="Reyrat J.-M."/>
            <person name="Van Dorsselaer A."/>
            <person name="Poch O."/>
            <person name="Schaeffer C."/>
            <person name="Lecompte O."/>
        </authorList>
    </citation>
    <scope>NUCLEOTIDE SEQUENCE [LARGE SCALE GENOMIC DNA]</scope>
    <source>
        <strain>ATCC 700084 / mc(2)155</strain>
    </source>
</reference>
<reference key="4">
    <citation type="journal article" date="2010" name="Mol. Biosyst.">
        <title>Expansion of the mycobacterial 'PUPylome'.</title>
        <authorList>
            <person name="Watrous J."/>
            <person name="Burns K."/>
            <person name="Liu W.T."/>
            <person name="Patel A."/>
            <person name="Hook V."/>
            <person name="Bafna V."/>
            <person name="Barry C.E. III"/>
            <person name="Bark S."/>
            <person name="Dorrestein P.C."/>
        </authorList>
    </citation>
    <scope>PUPYLATION AT LYS-10</scope>
    <scope>IDENTIFICATION BY MASS SPECTROMETRY</scope>
</reference>
<sequence>MTNSGALDTKFHALIQDQIRSEFTASQQYIAIAVFFDGADLPQLAKHFYAQALEERNHAMMLVQYLLDRDVEVEIPGIDPVCNNFTTPRDALALALDQERTVTEQISRLASVARDEGDHLGEQFMQWFLKEQVEEVAAMTTLVRIADRAGSNLFHIEDFVAREMSAAGADPTAPRAAGGAL</sequence>
<organism>
    <name type="scientific">Mycolicibacterium smegmatis (strain ATCC 700084 / mc(2)155)</name>
    <name type="common">Mycobacterium smegmatis</name>
    <dbReference type="NCBI Taxonomy" id="246196"/>
    <lineage>
        <taxon>Bacteria</taxon>
        <taxon>Bacillati</taxon>
        <taxon>Actinomycetota</taxon>
        <taxon>Actinomycetes</taxon>
        <taxon>Mycobacteriales</taxon>
        <taxon>Mycobacteriaceae</taxon>
        <taxon>Mycolicibacterium</taxon>
    </lineage>
</organism>
<name>BFRB_MYCS2</name>
<proteinExistence type="evidence at protein level"/>
<feature type="chain" id="PRO_0000396101" description="Ferritin BfrB">
    <location>
        <begin position="1"/>
        <end position="181"/>
    </location>
</feature>
<feature type="domain" description="Ferritin-like diiron" evidence="2">
    <location>
        <begin position="5"/>
        <end position="150"/>
    </location>
</feature>
<feature type="binding site" evidence="2">
    <location>
        <position position="22"/>
    </location>
    <ligand>
        <name>Fe cation</name>
        <dbReference type="ChEBI" id="CHEBI:24875"/>
        <label>1</label>
    </ligand>
</feature>
<feature type="binding site" evidence="2">
    <location>
        <position position="55"/>
    </location>
    <ligand>
        <name>Fe cation</name>
        <dbReference type="ChEBI" id="CHEBI:24875"/>
        <label>1</label>
    </ligand>
</feature>
<feature type="binding site" evidence="2">
    <location>
        <position position="55"/>
    </location>
    <ligand>
        <name>Fe cation</name>
        <dbReference type="ChEBI" id="CHEBI:24875"/>
        <label>2</label>
    </ligand>
</feature>
<feature type="binding site" evidence="2">
    <location>
        <position position="58"/>
    </location>
    <ligand>
        <name>Fe cation</name>
        <dbReference type="ChEBI" id="CHEBI:24875"/>
        <label>1</label>
    </ligand>
</feature>
<feature type="binding site" evidence="2">
    <location>
        <position position="99"/>
    </location>
    <ligand>
        <name>Fe cation</name>
        <dbReference type="ChEBI" id="CHEBI:24875"/>
        <label>2</label>
    </ligand>
</feature>
<feature type="binding site" evidence="2">
    <location>
        <position position="132"/>
    </location>
    <ligand>
        <name>Fe cation</name>
        <dbReference type="ChEBI" id="CHEBI:24875"/>
        <label>2</label>
    </ligand>
</feature>
<feature type="cross-link" description="Isoglutamyl lysine isopeptide (Lys-Gln) (interchain with Q-Cter in protein Pup)" evidence="3">
    <location>
        <position position="10"/>
    </location>
</feature>
<dbReference type="EC" id="1.16.3.1"/>
<dbReference type="EMBL" id="CP000480">
    <property type="protein sequence ID" value="ABK71142.1"/>
    <property type="molecule type" value="Genomic_DNA"/>
</dbReference>
<dbReference type="EMBL" id="CP001663">
    <property type="protein sequence ID" value="AFP42680.1"/>
    <property type="molecule type" value="Genomic_DNA"/>
</dbReference>
<dbReference type="RefSeq" id="WP_003897831.1">
    <property type="nucleotide sequence ID" value="NZ_SIJM01000013.1"/>
</dbReference>
<dbReference type="RefSeq" id="YP_890635.1">
    <property type="nucleotide sequence ID" value="NC_008596.1"/>
</dbReference>
<dbReference type="SMR" id="A0R647"/>
<dbReference type="STRING" id="246196.MSMEG_6422"/>
<dbReference type="PaxDb" id="246196-MSMEI_6254"/>
<dbReference type="KEGG" id="msb:LJ00_31750"/>
<dbReference type="KEGG" id="msg:MSMEI_6254"/>
<dbReference type="KEGG" id="msm:MSMEG_6422"/>
<dbReference type="PATRIC" id="fig|246196.19.peg.6249"/>
<dbReference type="eggNOG" id="COG1528">
    <property type="taxonomic scope" value="Bacteria"/>
</dbReference>
<dbReference type="OrthoDB" id="9801481at2"/>
<dbReference type="Proteomes" id="UP000000757">
    <property type="component" value="Chromosome"/>
</dbReference>
<dbReference type="Proteomes" id="UP000006158">
    <property type="component" value="Chromosome"/>
</dbReference>
<dbReference type="GO" id="GO:0005829">
    <property type="term" value="C:cytosol"/>
    <property type="evidence" value="ECO:0007669"/>
    <property type="project" value="TreeGrafter"/>
</dbReference>
<dbReference type="GO" id="GO:0008199">
    <property type="term" value="F:ferric iron binding"/>
    <property type="evidence" value="ECO:0007669"/>
    <property type="project" value="InterPro"/>
</dbReference>
<dbReference type="GO" id="GO:0008198">
    <property type="term" value="F:ferrous iron binding"/>
    <property type="evidence" value="ECO:0007669"/>
    <property type="project" value="TreeGrafter"/>
</dbReference>
<dbReference type="GO" id="GO:0004322">
    <property type="term" value="F:ferroxidase activity"/>
    <property type="evidence" value="ECO:0007669"/>
    <property type="project" value="UniProtKB-EC"/>
</dbReference>
<dbReference type="GO" id="GO:0006879">
    <property type="term" value="P:intracellular iron ion homeostasis"/>
    <property type="evidence" value="ECO:0007669"/>
    <property type="project" value="UniProtKB-KW"/>
</dbReference>
<dbReference type="GO" id="GO:0006826">
    <property type="term" value="P:iron ion transport"/>
    <property type="evidence" value="ECO:0007669"/>
    <property type="project" value="InterPro"/>
</dbReference>
<dbReference type="CDD" id="cd01055">
    <property type="entry name" value="Nonheme_Ferritin"/>
    <property type="match status" value="1"/>
</dbReference>
<dbReference type="Gene3D" id="1.20.1260.10">
    <property type="match status" value="1"/>
</dbReference>
<dbReference type="InterPro" id="IPR001519">
    <property type="entry name" value="Ferritin"/>
</dbReference>
<dbReference type="InterPro" id="IPR012347">
    <property type="entry name" value="Ferritin-like"/>
</dbReference>
<dbReference type="InterPro" id="IPR009040">
    <property type="entry name" value="Ferritin-like_diiron"/>
</dbReference>
<dbReference type="InterPro" id="IPR009078">
    <property type="entry name" value="Ferritin-like_SF"/>
</dbReference>
<dbReference type="InterPro" id="IPR008331">
    <property type="entry name" value="Ferritin_DPS_dom"/>
</dbReference>
<dbReference type="InterPro" id="IPR041719">
    <property type="entry name" value="Ferritin_prok"/>
</dbReference>
<dbReference type="PANTHER" id="PTHR11431:SF127">
    <property type="entry name" value="BACTERIAL NON-HEME FERRITIN"/>
    <property type="match status" value="1"/>
</dbReference>
<dbReference type="PANTHER" id="PTHR11431">
    <property type="entry name" value="FERRITIN"/>
    <property type="match status" value="1"/>
</dbReference>
<dbReference type="Pfam" id="PF00210">
    <property type="entry name" value="Ferritin"/>
    <property type="match status" value="1"/>
</dbReference>
<dbReference type="SUPFAM" id="SSF47240">
    <property type="entry name" value="Ferritin-like"/>
    <property type="match status" value="1"/>
</dbReference>
<dbReference type="PROSITE" id="PS50905">
    <property type="entry name" value="FERRITIN_LIKE"/>
    <property type="match status" value="1"/>
</dbReference>
<protein>
    <recommendedName>
        <fullName>Ferritin BfrB</fullName>
        <ecNumber>1.16.3.1</ecNumber>
    </recommendedName>
    <alternativeName>
        <fullName>Non-heme ferritin Ftn</fullName>
    </alternativeName>
</protein>